<dbReference type="EC" id="2.5.1.3" evidence="1"/>
<dbReference type="EMBL" id="AP008934">
    <property type="protein sequence ID" value="BAE17937.1"/>
    <property type="molecule type" value="Genomic_DNA"/>
</dbReference>
<dbReference type="RefSeq" id="WP_011302689.1">
    <property type="nucleotide sequence ID" value="NZ_MTGA01000032.1"/>
</dbReference>
<dbReference type="SMR" id="Q49Z39"/>
<dbReference type="GeneID" id="23780698"/>
<dbReference type="KEGG" id="ssp:SSP0792"/>
<dbReference type="PATRIC" id="fig|342451.11.peg.794"/>
<dbReference type="eggNOG" id="COG0352">
    <property type="taxonomic scope" value="Bacteria"/>
</dbReference>
<dbReference type="HOGENOM" id="CLU_018272_3_2_9"/>
<dbReference type="OrthoDB" id="9812206at2"/>
<dbReference type="UniPathway" id="UPA00060">
    <property type="reaction ID" value="UER00141"/>
</dbReference>
<dbReference type="Proteomes" id="UP000006371">
    <property type="component" value="Chromosome"/>
</dbReference>
<dbReference type="GO" id="GO:0005737">
    <property type="term" value="C:cytoplasm"/>
    <property type="evidence" value="ECO:0007669"/>
    <property type="project" value="TreeGrafter"/>
</dbReference>
<dbReference type="GO" id="GO:0000287">
    <property type="term" value="F:magnesium ion binding"/>
    <property type="evidence" value="ECO:0007669"/>
    <property type="project" value="UniProtKB-UniRule"/>
</dbReference>
<dbReference type="GO" id="GO:0004789">
    <property type="term" value="F:thiamine-phosphate diphosphorylase activity"/>
    <property type="evidence" value="ECO:0007669"/>
    <property type="project" value="UniProtKB-UniRule"/>
</dbReference>
<dbReference type="GO" id="GO:0009228">
    <property type="term" value="P:thiamine biosynthetic process"/>
    <property type="evidence" value="ECO:0007669"/>
    <property type="project" value="UniProtKB-KW"/>
</dbReference>
<dbReference type="GO" id="GO:0009229">
    <property type="term" value="P:thiamine diphosphate biosynthetic process"/>
    <property type="evidence" value="ECO:0007669"/>
    <property type="project" value="UniProtKB-UniRule"/>
</dbReference>
<dbReference type="CDD" id="cd00564">
    <property type="entry name" value="TMP_TenI"/>
    <property type="match status" value="1"/>
</dbReference>
<dbReference type="FunFam" id="3.20.20.70:FF:000096">
    <property type="entry name" value="Thiamine-phosphate synthase"/>
    <property type="match status" value="1"/>
</dbReference>
<dbReference type="Gene3D" id="3.20.20.70">
    <property type="entry name" value="Aldolase class I"/>
    <property type="match status" value="1"/>
</dbReference>
<dbReference type="HAMAP" id="MF_00097">
    <property type="entry name" value="TMP_synthase"/>
    <property type="match status" value="1"/>
</dbReference>
<dbReference type="InterPro" id="IPR013785">
    <property type="entry name" value="Aldolase_TIM"/>
</dbReference>
<dbReference type="InterPro" id="IPR036206">
    <property type="entry name" value="ThiamineP_synth_sf"/>
</dbReference>
<dbReference type="InterPro" id="IPR022998">
    <property type="entry name" value="ThiamineP_synth_TenI"/>
</dbReference>
<dbReference type="InterPro" id="IPR034291">
    <property type="entry name" value="TMP_synthase"/>
</dbReference>
<dbReference type="NCBIfam" id="TIGR00693">
    <property type="entry name" value="thiE"/>
    <property type="match status" value="1"/>
</dbReference>
<dbReference type="PANTHER" id="PTHR20857">
    <property type="entry name" value="THIAMINE-PHOSPHATE PYROPHOSPHORYLASE"/>
    <property type="match status" value="1"/>
</dbReference>
<dbReference type="PANTHER" id="PTHR20857:SF15">
    <property type="entry name" value="THIAMINE-PHOSPHATE SYNTHASE"/>
    <property type="match status" value="1"/>
</dbReference>
<dbReference type="Pfam" id="PF02581">
    <property type="entry name" value="TMP-TENI"/>
    <property type="match status" value="1"/>
</dbReference>
<dbReference type="SUPFAM" id="SSF51391">
    <property type="entry name" value="Thiamin phosphate synthase"/>
    <property type="match status" value="1"/>
</dbReference>
<sequence>MFDKNNLKLYFICGTQDIESKTTIIDVVTEALESGITMFQFREKGNGALIGDEKEDLARKLLALCHDYAVPFIVNDDVALANKIGADGIHVGQDDMDVKVFAEQFKGKIIGLSISNIDEYKTSNLAHVDYIGVGPMYATTSKDDANLPVGPEMITKLRAHVNHFPIVAIGGINVENTREVMQAGADGISIISAITKSENISNTISQFLQNVE</sequence>
<evidence type="ECO:0000255" key="1">
    <source>
        <dbReference type="HAMAP-Rule" id="MF_00097"/>
    </source>
</evidence>
<name>THIE_STAS1</name>
<protein>
    <recommendedName>
        <fullName evidence="1">Thiamine-phosphate synthase</fullName>
        <shortName evidence="1">TP synthase</shortName>
        <shortName evidence="1">TPS</shortName>
        <ecNumber evidence="1">2.5.1.3</ecNumber>
    </recommendedName>
    <alternativeName>
        <fullName evidence="1">Thiamine-phosphate pyrophosphorylase</fullName>
        <shortName evidence="1">TMP pyrophosphorylase</shortName>
        <shortName evidence="1">TMP-PPase</shortName>
    </alternativeName>
</protein>
<feature type="chain" id="PRO_1000008179" description="Thiamine-phosphate synthase">
    <location>
        <begin position="1"/>
        <end position="212"/>
    </location>
</feature>
<feature type="binding site" evidence="1">
    <location>
        <begin position="40"/>
        <end position="44"/>
    </location>
    <ligand>
        <name>4-amino-2-methyl-5-(diphosphooxymethyl)pyrimidine</name>
        <dbReference type="ChEBI" id="CHEBI:57841"/>
    </ligand>
</feature>
<feature type="binding site" evidence="1">
    <location>
        <position position="75"/>
    </location>
    <ligand>
        <name>4-amino-2-methyl-5-(diphosphooxymethyl)pyrimidine</name>
        <dbReference type="ChEBI" id="CHEBI:57841"/>
    </ligand>
</feature>
<feature type="binding site" evidence="1">
    <location>
        <position position="76"/>
    </location>
    <ligand>
        <name>Mg(2+)</name>
        <dbReference type="ChEBI" id="CHEBI:18420"/>
    </ligand>
</feature>
<feature type="binding site" evidence="1">
    <location>
        <position position="95"/>
    </location>
    <ligand>
        <name>Mg(2+)</name>
        <dbReference type="ChEBI" id="CHEBI:18420"/>
    </ligand>
</feature>
<feature type="binding site" evidence="1">
    <location>
        <position position="113"/>
    </location>
    <ligand>
        <name>4-amino-2-methyl-5-(diphosphooxymethyl)pyrimidine</name>
        <dbReference type="ChEBI" id="CHEBI:57841"/>
    </ligand>
</feature>
<feature type="binding site" evidence="1">
    <location>
        <begin position="139"/>
        <end position="141"/>
    </location>
    <ligand>
        <name>2-[(2R,5Z)-2-carboxy-4-methylthiazol-5(2H)-ylidene]ethyl phosphate</name>
        <dbReference type="ChEBI" id="CHEBI:62899"/>
    </ligand>
</feature>
<feature type="binding site" evidence="1">
    <location>
        <position position="142"/>
    </location>
    <ligand>
        <name>4-amino-2-methyl-5-(diphosphooxymethyl)pyrimidine</name>
        <dbReference type="ChEBI" id="CHEBI:57841"/>
    </ligand>
</feature>
<feature type="binding site" evidence="1">
    <location>
        <position position="171"/>
    </location>
    <ligand>
        <name>2-[(2R,5Z)-2-carboxy-4-methylthiazol-5(2H)-ylidene]ethyl phosphate</name>
        <dbReference type="ChEBI" id="CHEBI:62899"/>
    </ligand>
</feature>
<feature type="binding site" evidence="1">
    <location>
        <begin position="191"/>
        <end position="192"/>
    </location>
    <ligand>
        <name>2-[(2R,5Z)-2-carboxy-4-methylthiazol-5(2H)-ylidene]ethyl phosphate</name>
        <dbReference type="ChEBI" id="CHEBI:62899"/>
    </ligand>
</feature>
<reference key="1">
    <citation type="journal article" date="2005" name="Proc. Natl. Acad. Sci. U.S.A.">
        <title>Whole genome sequence of Staphylococcus saprophyticus reveals the pathogenesis of uncomplicated urinary tract infection.</title>
        <authorList>
            <person name="Kuroda M."/>
            <person name="Yamashita A."/>
            <person name="Hirakawa H."/>
            <person name="Kumano M."/>
            <person name="Morikawa K."/>
            <person name="Higashide M."/>
            <person name="Maruyama A."/>
            <person name="Inose Y."/>
            <person name="Matoba K."/>
            <person name="Toh H."/>
            <person name="Kuhara S."/>
            <person name="Hattori M."/>
            <person name="Ohta T."/>
        </authorList>
    </citation>
    <scope>NUCLEOTIDE SEQUENCE [LARGE SCALE GENOMIC DNA]</scope>
    <source>
        <strain>ATCC 15305 / DSM 20229 / NCIMB 8711 / NCTC 7292 / S-41</strain>
    </source>
</reference>
<proteinExistence type="inferred from homology"/>
<organism>
    <name type="scientific">Staphylococcus saprophyticus subsp. saprophyticus (strain ATCC 15305 / DSM 20229 / NCIMB 8711 / NCTC 7292 / S-41)</name>
    <dbReference type="NCBI Taxonomy" id="342451"/>
    <lineage>
        <taxon>Bacteria</taxon>
        <taxon>Bacillati</taxon>
        <taxon>Bacillota</taxon>
        <taxon>Bacilli</taxon>
        <taxon>Bacillales</taxon>
        <taxon>Staphylococcaceae</taxon>
        <taxon>Staphylococcus</taxon>
    </lineage>
</organism>
<accession>Q49Z39</accession>
<keyword id="KW-0460">Magnesium</keyword>
<keyword id="KW-0479">Metal-binding</keyword>
<keyword id="KW-1185">Reference proteome</keyword>
<keyword id="KW-0784">Thiamine biosynthesis</keyword>
<keyword id="KW-0808">Transferase</keyword>
<gene>
    <name evidence="1" type="primary">thiE</name>
    <name type="ordered locus">SSP0792</name>
</gene>
<comment type="function">
    <text evidence="1">Condenses 4-methyl-5-(beta-hydroxyethyl)thiazole monophosphate (THZ-P) and 2-methyl-4-amino-5-hydroxymethyl pyrimidine pyrophosphate (HMP-PP) to form thiamine monophosphate (TMP).</text>
</comment>
<comment type="catalytic activity">
    <reaction evidence="1">
        <text>2-[(2R,5Z)-2-carboxy-4-methylthiazol-5(2H)-ylidene]ethyl phosphate + 4-amino-2-methyl-5-(diphosphooxymethyl)pyrimidine + 2 H(+) = thiamine phosphate + CO2 + diphosphate</text>
        <dbReference type="Rhea" id="RHEA:47844"/>
        <dbReference type="ChEBI" id="CHEBI:15378"/>
        <dbReference type="ChEBI" id="CHEBI:16526"/>
        <dbReference type="ChEBI" id="CHEBI:33019"/>
        <dbReference type="ChEBI" id="CHEBI:37575"/>
        <dbReference type="ChEBI" id="CHEBI:57841"/>
        <dbReference type="ChEBI" id="CHEBI:62899"/>
        <dbReference type="EC" id="2.5.1.3"/>
    </reaction>
</comment>
<comment type="catalytic activity">
    <reaction evidence="1">
        <text>2-(2-carboxy-4-methylthiazol-5-yl)ethyl phosphate + 4-amino-2-methyl-5-(diphosphooxymethyl)pyrimidine + 2 H(+) = thiamine phosphate + CO2 + diphosphate</text>
        <dbReference type="Rhea" id="RHEA:47848"/>
        <dbReference type="ChEBI" id="CHEBI:15378"/>
        <dbReference type="ChEBI" id="CHEBI:16526"/>
        <dbReference type="ChEBI" id="CHEBI:33019"/>
        <dbReference type="ChEBI" id="CHEBI:37575"/>
        <dbReference type="ChEBI" id="CHEBI:57841"/>
        <dbReference type="ChEBI" id="CHEBI:62890"/>
        <dbReference type="EC" id="2.5.1.3"/>
    </reaction>
</comment>
<comment type="catalytic activity">
    <reaction evidence="1">
        <text>4-methyl-5-(2-phosphooxyethyl)-thiazole + 4-amino-2-methyl-5-(diphosphooxymethyl)pyrimidine + H(+) = thiamine phosphate + diphosphate</text>
        <dbReference type="Rhea" id="RHEA:22328"/>
        <dbReference type="ChEBI" id="CHEBI:15378"/>
        <dbReference type="ChEBI" id="CHEBI:33019"/>
        <dbReference type="ChEBI" id="CHEBI:37575"/>
        <dbReference type="ChEBI" id="CHEBI:57841"/>
        <dbReference type="ChEBI" id="CHEBI:58296"/>
        <dbReference type="EC" id="2.5.1.3"/>
    </reaction>
</comment>
<comment type="cofactor">
    <cofactor evidence="1">
        <name>Mg(2+)</name>
        <dbReference type="ChEBI" id="CHEBI:18420"/>
    </cofactor>
    <text evidence="1">Binds 1 Mg(2+) ion per subunit.</text>
</comment>
<comment type="pathway">
    <text evidence="1">Cofactor biosynthesis; thiamine diphosphate biosynthesis; thiamine phosphate from 4-amino-2-methyl-5-diphosphomethylpyrimidine and 4-methyl-5-(2-phosphoethyl)-thiazole: step 1/1.</text>
</comment>
<comment type="similarity">
    <text evidence="1">Belongs to the thiamine-phosphate synthase family.</text>
</comment>